<proteinExistence type="inferred from homology"/>
<evidence type="ECO:0000255" key="1">
    <source>
        <dbReference type="HAMAP-Rule" id="MF_01617"/>
    </source>
</evidence>
<protein>
    <recommendedName>
        <fullName evidence="1">Fatty acid oxidation complex subunit alpha</fullName>
    </recommendedName>
    <domain>
        <recommendedName>
            <fullName evidence="1">Enoyl-CoA hydratase/3-hydroxybutyryl-CoA epimerase</fullName>
            <ecNumber evidence="1">4.2.1.17</ecNumber>
            <ecNumber evidence="1">5.1.2.3</ecNumber>
        </recommendedName>
    </domain>
    <domain>
        <recommendedName>
            <fullName evidence="1">3-hydroxyacyl-CoA dehydrogenase</fullName>
            <ecNumber evidence="1">1.1.1.35</ecNumber>
        </recommendedName>
    </domain>
</protein>
<name>FADJ_SALPA</name>
<dbReference type="EC" id="4.2.1.17" evidence="1"/>
<dbReference type="EC" id="5.1.2.3" evidence="1"/>
<dbReference type="EC" id="1.1.1.35" evidence="1"/>
<dbReference type="EMBL" id="CP000026">
    <property type="protein sequence ID" value="AAV76478.1"/>
    <property type="molecule type" value="Genomic_DNA"/>
</dbReference>
<dbReference type="RefSeq" id="WP_000214131.1">
    <property type="nucleotide sequence ID" value="NC_006511.1"/>
</dbReference>
<dbReference type="SMR" id="Q5PCX6"/>
<dbReference type="KEGG" id="spt:SPA0476"/>
<dbReference type="HOGENOM" id="CLU_009834_16_3_6"/>
<dbReference type="UniPathway" id="UPA00659"/>
<dbReference type="Proteomes" id="UP000008185">
    <property type="component" value="Chromosome"/>
</dbReference>
<dbReference type="GO" id="GO:0005737">
    <property type="term" value="C:cytoplasm"/>
    <property type="evidence" value="ECO:0007669"/>
    <property type="project" value="UniProtKB-SubCell"/>
</dbReference>
<dbReference type="GO" id="GO:0008692">
    <property type="term" value="F:3-hydroxybutyryl-CoA epimerase activity"/>
    <property type="evidence" value="ECO:0007669"/>
    <property type="project" value="UniProtKB-UniRule"/>
</dbReference>
<dbReference type="GO" id="GO:0004300">
    <property type="term" value="F:enoyl-CoA hydratase activity"/>
    <property type="evidence" value="ECO:0007669"/>
    <property type="project" value="UniProtKB-UniRule"/>
</dbReference>
<dbReference type="GO" id="GO:0016509">
    <property type="term" value="F:long-chain-3-hydroxyacyl-CoA dehydrogenase activity"/>
    <property type="evidence" value="ECO:0007669"/>
    <property type="project" value="TreeGrafter"/>
</dbReference>
<dbReference type="GO" id="GO:0070403">
    <property type="term" value="F:NAD+ binding"/>
    <property type="evidence" value="ECO:0007669"/>
    <property type="project" value="InterPro"/>
</dbReference>
<dbReference type="GO" id="GO:0006635">
    <property type="term" value="P:fatty acid beta-oxidation"/>
    <property type="evidence" value="ECO:0007669"/>
    <property type="project" value="UniProtKB-UniRule"/>
</dbReference>
<dbReference type="CDD" id="cd06558">
    <property type="entry name" value="crotonase-like"/>
    <property type="match status" value="1"/>
</dbReference>
<dbReference type="FunFam" id="1.10.1040.50:FF:000003">
    <property type="entry name" value="Fatty acid oxidation complex subunit alpha"/>
    <property type="match status" value="1"/>
</dbReference>
<dbReference type="FunFam" id="3.90.226.10:FF:000011">
    <property type="entry name" value="Fatty acid oxidation complex subunit alpha"/>
    <property type="match status" value="1"/>
</dbReference>
<dbReference type="FunFam" id="3.40.50.720:FF:000009">
    <property type="entry name" value="Fatty oxidation complex, alpha subunit"/>
    <property type="match status" value="1"/>
</dbReference>
<dbReference type="Gene3D" id="1.10.1040.50">
    <property type="match status" value="1"/>
</dbReference>
<dbReference type="Gene3D" id="3.90.226.10">
    <property type="entry name" value="2-enoyl-CoA Hydratase, Chain A, domain 1"/>
    <property type="match status" value="1"/>
</dbReference>
<dbReference type="Gene3D" id="3.40.50.720">
    <property type="entry name" value="NAD(P)-binding Rossmann-like Domain"/>
    <property type="match status" value="1"/>
</dbReference>
<dbReference type="HAMAP" id="MF_01617">
    <property type="entry name" value="FadJ"/>
    <property type="match status" value="1"/>
</dbReference>
<dbReference type="InterPro" id="IPR006180">
    <property type="entry name" value="3-OHacyl-CoA_DH_CS"/>
</dbReference>
<dbReference type="InterPro" id="IPR006176">
    <property type="entry name" value="3-OHacyl-CoA_DH_NAD-bd"/>
</dbReference>
<dbReference type="InterPro" id="IPR006108">
    <property type="entry name" value="3HC_DH_C"/>
</dbReference>
<dbReference type="InterPro" id="IPR008927">
    <property type="entry name" value="6-PGluconate_DH-like_C_sf"/>
</dbReference>
<dbReference type="InterPro" id="IPR029045">
    <property type="entry name" value="ClpP/crotonase-like_dom_sf"/>
</dbReference>
<dbReference type="InterPro" id="IPR001753">
    <property type="entry name" value="Enoyl-CoA_hydra/iso"/>
</dbReference>
<dbReference type="InterPro" id="IPR050136">
    <property type="entry name" value="FA_oxidation_alpha_subunit"/>
</dbReference>
<dbReference type="InterPro" id="IPR012802">
    <property type="entry name" value="FadJ"/>
</dbReference>
<dbReference type="InterPro" id="IPR036291">
    <property type="entry name" value="NAD(P)-bd_dom_sf"/>
</dbReference>
<dbReference type="NCBIfam" id="TIGR02440">
    <property type="entry name" value="FadJ"/>
    <property type="match status" value="1"/>
</dbReference>
<dbReference type="NCBIfam" id="NF008363">
    <property type="entry name" value="PRK11154.1"/>
    <property type="match status" value="1"/>
</dbReference>
<dbReference type="PANTHER" id="PTHR43612">
    <property type="entry name" value="TRIFUNCTIONAL ENZYME SUBUNIT ALPHA"/>
    <property type="match status" value="1"/>
</dbReference>
<dbReference type="PANTHER" id="PTHR43612:SF3">
    <property type="entry name" value="TRIFUNCTIONAL ENZYME SUBUNIT ALPHA, MITOCHONDRIAL"/>
    <property type="match status" value="1"/>
</dbReference>
<dbReference type="Pfam" id="PF00725">
    <property type="entry name" value="3HCDH"/>
    <property type="match status" value="1"/>
</dbReference>
<dbReference type="Pfam" id="PF02737">
    <property type="entry name" value="3HCDH_N"/>
    <property type="match status" value="1"/>
</dbReference>
<dbReference type="Pfam" id="PF00378">
    <property type="entry name" value="ECH_1"/>
    <property type="match status" value="1"/>
</dbReference>
<dbReference type="SUPFAM" id="SSF48179">
    <property type="entry name" value="6-phosphogluconate dehydrogenase C-terminal domain-like"/>
    <property type="match status" value="2"/>
</dbReference>
<dbReference type="SUPFAM" id="SSF52096">
    <property type="entry name" value="ClpP/crotonase"/>
    <property type="match status" value="1"/>
</dbReference>
<dbReference type="SUPFAM" id="SSF51735">
    <property type="entry name" value="NAD(P)-binding Rossmann-fold domains"/>
    <property type="match status" value="1"/>
</dbReference>
<dbReference type="PROSITE" id="PS00067">
    <property type="entry name" value="3HCDH"/>
    <property type="match status" value="1"/>
</dbReference>
<reference key="1">
    <citation type="journal article" date="2004" name="Nat. Genet.">
        <title>Comparison of genome degradation in Paratyphi A and Typhi, human-restricted serovars of Salmonella enterica that cause typhoid.</title>
        <authorList>
            <person name="McClelland M."/>
            <person name="Sanderson K.E."/>
            <person name="Clifton S.W."/>
            <person name="Latreille P."/>
            <person name="Porwollik S."/>
            <person name="Sabo A."/>
            <person name="Meyer R."/>
            <person name="Bieri T."/>
            <person name="Ozersky P."/>
            <person name="McLellan M."/>
            <person name="Harkins C.R."/>
            <person name="Wang C."/>
            <person name="Nguyen C."/>
            <person name="Berghoff A."/>
            <person name="Elliott G."/>
            <person name="Kohlberg S."/>
            <person name="Strong C."/>
            <person name="Du F."/>
            <person name="Carter J."/>
            <person name="Kremizki C."/>
            <person name="Layman D."/>
            <person name="Leonard S."/>
            <person name="Sun H."/>
            <person name="Fulton L."/>
            <person name="Nash W."/>
            <person name="Miner T."/>
            <person name="Minx P."/>
            <person name="Delehaunty K."/>
            <person name="Fronick C."/>
            <person name="Magrini V."/>
            <person name="Nhan M."/>
            <person name="Warren W."/>
            <person name="Florea L."/>
            <person name="Spieth J."/>
            <person name="Wilson R.K."/>
        </authorList>
    </citation>
    <scope>NUCLEOTIDE SEQUENCE [LARGE SCALE GENOMIC DNA]</scope>
    <source>
        <strain>ATCC 9150 / SARB42</strain>
    </source>
</reference>
<accession>Q5PCX6</accession>
<organism>
    <name type="scientific">Salmonella paratyphi A (strain ATCC 9150 / SARB42)</name>
    <dbReference type="NCBI Taxonomy" id="295319"/>
    <lineage>
        <taxon>Bacteria</taxon>
        <taxon>Pseudomonadati</taxon>
        <taxon>Pseudomonadota</taxon>
        <taxon>Gammaproteobacteria</taxon>
        <taxon>Enterobacterales</taxon>
        <taxon>Enterobacteriaceae</taxon>
        <taxon>Salmonella</taxon>
    </lineage>
</organism>
<feature type="chain" id="PRO_0000109305" description="Fatty acid oxidation complex subunit alpha">
    <location>
        <begin position="1"/>
        <end position="715"/>
    </location>
</feature>
<feature type="region of interest" description="Enoyl-CoA hydratase" evidence="1">
    <location>
        <begin position="1"/>
        <end position="190"/>
    </location>
</feature>
<feature type="region of interest" description="3-hydroxyacyl-CoA dehydrogenase" evidence="1">
    <location>
        <begin position="306"/>
        <end position="714"/>
    </location>
</feature>
<feature type="site" description="Important for catalytic activity" evidence="1">
    <location>
        <position position="118"/>
    </location>
</feature>
<feature type="site" description="Important for catalytic activity" evidence="1">
    <location>
        <position position="140"/>
    </location>
</feature>
<keyword id="KW-0963">Cytoplasm</keyword>
<keyword id="KW-0276">Fatty acid metabolism</keyword>
<keyword id="KW-0413">Isomerase</keyword>
<keyword id="KW-0442">Lipid degradation</keyword>
<keyword id="KW-0443">Lipid metabolism</keyword>
<keyword id="KW-0456">Lyase</keyword>
<keyword id="KW-0511">Multifunctional enzyme</keyword>
<keyword id="KW-0520">NAD</keyword>
<keyword id="KW-0560">Oxidoreductase</keyword>
<sequence length="715" mass="77235">MTTTSAFMLNVRLDNVAVVAIDVPGEKVNTLKAEFAAQVRAILKQIRENKALQGVVFISAKADNFIAGADINIIGHCQNAQEAETLARQGQQLMAEIQALPVPVIAAIHGACLGGGLEMALACHRRICTDDVKTVLGLPEVQLGLLPGSGGTQRLPRLVGVSTALDMILIGKQLRARQALKAGLVDDVVPQTILLEAAVELAKKERLAQRTLPVRERILAGPLGRALLFRLVRKKTAQKTQGNYPATERIIDVIETGLAQGSSSGYDAEARAFGELAMTPQSQALRAVFFASTEVKKDPGSDAPPGPLNSVGILGGGLMGGGIAWVTACKGGLPVRIKDINTQGINHALKYSWDLLETKVRRRHIKASERDKQLALISGSTDYRGFSHRDLVIEAVFEDLPLKQQMVAEVEQNCATHTIFASNTSSLPIGDIAANAARPEQVIGLHFFSPVEKMPLVEVIPHASTSAQTIATTVKLAKKQGKTPIVVSDKAGFYVNRILAPYINEAIRMLTEGERVEHIDAALVKFGFPVGPIQLLDEVGIDTGTKIIPVLEAAYGERFSAPANVVASILNDDRKGRKNGRGFYLYGEKGRKSKKQVDPAIYKLIGVQGQSRLSAQQVAERCVMLMLNEAARCFDEKVIRSARDGDIGAVFGIGFPPFLGGPFRYMDALGPGEMVATLQRLAALYGPRYAPCEQLVRMAERREHFWTNGETDQGN</sequence>
<comment type="function">
    <text evidence="1">Catalyzes the formation of a hydroxyacyl-CoA by addition of water on enoyl-CoA. Also exhibits 3-hydroxyacyl-CoA epimerase and 3-hydroxyacyl-CoA dehydrogenase activities.</text>
</comment>
<comment type="catalytic activity">
    <reaction evidence="1">
        <text>a (3S)-3-hydroxyacyl-CoA = a (2E)-enoyl-CoA + H2O</text>
        <dbReference type="Rhea" id="RHEA:16105"/>
        <dbReference type="ChEBI" id="CHEBI:15377"/>
        <dbReference type="ChEBI" id="CHEBI:57318"/>
        <dbReference type="ChEBI" id="CHEBI:58856"/>
        <dbReference type="EC" id="4.2.1.17"/>
    </reaction>
</comment>
<comment type="catalytic activity">
    <reaction evidence="1">
        <text>a 4-saturated-(3S)-3-hydroxyacyl-CoA = a (3E)-enoyl-CoA + H2O</text>
        <dbReference type="Rhea" id="RHEA:20724"/>
        <dbReference type="ChEBI" id="CHEBI:15377"/>
        <dbReference type="ChEBI" id="CHEBI:58521"/>
        <dbReference type="ChEBI" id="CHEBI:137480"/>
        <dbReference type="EC" id="4.2.1.17"/>
    </reaction>
</comment>
<comment type="catalytic activity">
    <reaction evidence="1">
        <text>a (3S)-3-hydroxyacyl-CoA + NAD(+) = a 3-oxoacyl-CoA + NADH + H(+)</text>
        <dbReference type="Rhea" id="RHEA:22432"/>
        <dbReference type="ChEBI" id="CHEBI:15378"/>
        <dbReference type="ChEBI" id="CHEBI:57318"/>
        <dbReference type="ChEBI" id="CHEBI:57540"/>
        <dbReference type="ChEBI" id="CHEBI:57945"/>
        <dbReference type="ChEBI" id="CHEBI:90726"/>
        <dbReference type="EC" id="1.1.1.35"/>
    </reaction>
</comment>
<comment type="catalytic activity">
    <reaction evidence="1">
        <text>(3S)-3-hydroxybutanoyl-CoA = (3R)-3-hydroxybutanoyl-CoA</text>
        <dbReference type="Rhea" id="RHEA:21760"/>
        <dbReference type="ChEBI" id="CHEBI:57315"/>
        <dbReference type="ChEBI" id="CHEBI:57316"/>
        <dbReference type="EC" id="5.1.2.3"/>
    </reaction>
</comment>
<comment type="pathway">
    <text evidence="1">Lipid metabolism; fatty acid beta-oxidation.</text>
</comment>
<comment type="subunit">
    <text evidence="1">Heterotetramer of two alpha chains (FadJ) and two beta chains (FadI).</text>
</comment>
<comment type="subcellular location">
    <subcellularLocation>
        <location evidence="1">Cytoplasm</location>
    </subcellularLocation>
</comment>
<comment type="similarity">
    <text evidence="1">In the N-terminal section; belongs to the enoyl-CoA hydratase/isomerase family.</text>
</comment>
<comment type="similarity">
    <text evidence="1">In the central section; belongs to the 3-hydroxyacyl-CoA dehydrogenase family.</text>
</comment>
<gene>
    <name evidence="1" type="primary">fadJ</name>
    <name type="ordered locus">SPA0476</name>
</gene>